<reference key="1">
    <citation type="journal article" date="2005" name="Nat. Biotechnol.">
        <title>Complete genome sequence of the plant commensal Pseudomonas fluorescens Pf-5.</title>
        <authorList>
            <person name="Paulsen I.T."/>
            <person name="Press C.M."/>
            <person name="Ravel J."/>
            <person name="Kobayashi D.Y."/>
            <person name="Myers G.S.A."/>
            <person name="Mavrodi D.V."/>
            <person name="DeBoy R.T."/>
            <person name="Seshadri R."/>
            <person name="Ren Q."/>
            <person name="Madupu R."/>
            <person name="Dodson R.J."/>
            <person name="Durkin A.S."/>
            <person name="Brinkac L.M."/>
            <person name="Daugherty S.C."/>
            <person name="Sullivan S.A."/>
            <person name="Rosovitz M.J."/>
            <person name="Gwinn M.L."/>
            <person name="Zhou L."/>
            <person name="Schneider D.J."/>
            <person name="Cartinhour S.W."/>
            <person name="Nelson W.C."/>
            <person name="Weidman J."/>
            <person name="Watkins K."/>
            <person name="Tran K."/>
            <person name="Khouri H."/>
            <person name="Pierson E.A."/>
            <person name="Pierson L.S. III"/>
            <person name="Thomashow L.S."/>
            <person name="Loper J.E."/>
        </authorList>
    </citation>
    <scope>NUCLEOTIDE SEQUENCE [LARGE SCALE GENOMIC DNA]</scope>
    <source>
        <strain>ATCC BAA-477 / NRRL B-23932 / Pf-5</strain>
    </source>
</reference>
<dbReference type="EC" id="4.2.1.9" evidence="1"/>
<dbReference type="EMBL" id="CP000076">
    <property type="protein sequence ID" value="AAY95067.1"/>
    <property type="molecule type" value="Genomic_DNA"/>
</dbReference>
<dbReference type="RefSeq" id="WP_011064050.1">
    <property type="nucleotide sequence ID" value="NC_004129.6"/>
</dbReference>
<dbReference type="SMR" id="Q4K498"/>
<dbReference type="STRING" id="220664.PFL_5877"/>
<dbReference type="KEGG" id="pfl:PFL_5877"/>
<dbReference type="PATRIC" id="fig|220664.5.peg.5991"/>
<dbReference type="eggNOG" id="COG0129">
    <property type="taxonomic scope" value="Bacteria"/>
</dbReference>
<dbReference type="HOGENOM" id="CLU_014271_4_2_6"/>
<dbReference type="UniPathway" id="UPA00047">
    <property type="reaction ID" value="UER00057"/>
</dbReference>
<dbReference type="UniPathway" id="UPA00049">
    <property type="reaction ID" value="UER00061"/>
</dbReference>
<dbReference type="Proteomes" id="UP000008540">
    <property type="component" value="Chromosome"/>
</dbReference>
<dbReference type="GO" id="GO:0005829">
    <property type="term" value="C:cytosol"/>
    <property type="evidence" value="ECO:0007669"/>
    <property type="project" value="TreeGrafter"/>
</dbReference>
<dbReference type="GO" id="GO:0051537">
    <property type="term" value="F:2 iron, 2 sulfur cluster binding"/>
    <property type="evidence" value="ECO:0007669"/>
    <property type="project" value="UniProtKB-UniRule"/>
</dbReference>
<dbReference type="GO" id="GO:0004160">
    <property type="term" value="F:dihydroxy-acid dehydratase activity"/>
    <property type="evidence" value="ECO:0007669"/>
    <property type="project" value="UniProtKB-UniRule"/>
</dbReference>
<dbReference type="GO" id="GO:0000287">
    <property type="term" value="F:magnesium ion binding"/>
    <property type="evidence" value="ECO:0007669"/>
    <property type="project" value="UniProtKB-UniRule"/>
</dbReference>
<dbReference type="GO" id="GO:0009097">
    <property type="term" value="P:isoleucine biosynthetic process"/>
    <property type="evidence" value="ECO:0007669"/>
    <property type="project" value="UniProtKB-UniRule"/>
</dbReference>
<dbReference type="GO" id="GO:0009099">
    <property type="term" value="P:L-valine biosynthetic process"/>
    <property type="evidence" value="ECO:0007669"/>
    <property type="project" value="UniProtKB-UniRule"/>
</dbReference>
<dbReference type="FunFam" id="3.50.30.80:FF:000001">
    <property type="entry name" value="Dihydroxy-acid dehydratase"/>
    <property type="match status" value="1"/>
</dbReference>
<dbReference type="Gene3D" id="3.50.30.80">
    <property type="entry name" value="IlvD/EDD C-terminal domain-like"/>
    <property type="match status" value="1"/>
</dbReference>
<dbReference type="HAMAP" id="MF_00012">
    <property type="entry name" value="IlvD"/>
    <property type="match status" value="1"/>
</dbReference>
<dbReference type="InterPro" id="IPR042096">
    <property type="entry name" value="Dihydro-acid_dehy_C"/>
</dbReference>
<dbReference type="InterPro" id="IPR004404">
    <property type="entry name" value="DihydroxyA_deHydtase"/>
</dbReference>
<dbReference type="InterPro" id="IPR020558">
    <property type="entry name" value="DiOHA_6PGluconate_deHydtase_CS"/>
</dbReference>
<dbReference type="InterPro" id="IPR056740">
    <property type="entry name" value="ILV_EDD_C"/>
</dbReference>
<dbReference type="InterPro" id="IPR000581">
    <property type="entry name" value="ILV_EDD_N"/>
</dbReference>
<dbReference type="InterPro" id="IPR037237">
    <property type="entry name" value="IlvD/EDD_N"/>
</dbReference>
<dbReference type="NCBIfam" id="TIGR00110">
    <property type="entry name" value="ilvD"/>
    <property type="match status" value="1"/>
</dbReference>
<dbReference type="NCBIfam" id="NF009103">
    <property type="entry name" value="PRK12448.1"/>
    <property type="match status" value="1"/>
</dbReference>
<dbReference type="PANTHER" id="PTHR43661">
    <property type="entry name" value="D-XYLONATE DEHYDRATASE"/>
    <property type="match status" value="1"/>
</dbReference>
<dbReference type="PANTHER" id="PTHR43661:SF3">
    <property type="entry name" value="D-XYLONATE DEHYDRATASE YAGF-RELATED"/>
    <property type="match status" value="1"/>
</dbReference>
<dbReference type="Pfam" id="PF24877">
    <property type="entry name" value="ILV_EDD_C"/>
    <property type="match status" value="1"/>
</dbReference>
<dbReference type="Pfam" id="PF00920">
    <property type="entry name" value="ILVD_EDD_N"/>
    <property type="match status" value="1"/>
</dbReference>
<dbReference type="SUPFAM" id="SSF143975">
    <property type="entry name" value="IlvD/EDD N-terminal domain-like"/>
    <property type="match status" value="1"/>
</dbReference>
<dbReference type="SUPFAM" id="SSF52016">
    <property type="entry name" value="LeuD/IlvD-like"/>
    <property type="match status" value="1"/>
</dbReference>
<dbReference type="PROSITE" id="PS00886">
    <property type="entry name" value="ILVD_EDD_1"/>
    <property type="match status" value="1"/>
</dbReference>
<dbReference type="PROSITE" id="PS00887">
    <property type="entry name" value="ILVD_EDD_2"/>
    <property type="match status" value="1"/>
</dbReference>
<comment type="function">
    <text evidence="1">Functions in the biosynthesis of branched-chain amino acids. Catalyzes the dehydration of (2R,3R)-2,3-dihydroxy-3-methylpentanoate (2,3-dihydroxy-3-methylvalerate) into 2-oxo-3-methylpentanoate (2-oxo-3-methylvalerate) and of (2R)-2,3-dihydroxy-3-methylbutanoate (2,3-dihydroxyisovalerate) into 2-oxo-3-methylbutanoate (2-oxoisovalerate), the penultimate precursor to L-isoleucine and L-valine, respectively.</text>
</comment>
<comment type="catalytic activity">
    <reaction evidence="1">
        <text>(2R)-2,3-dihydroxy-3-methylbutanoate = 3-methyl-2-oxobutanoate + H2O</text>
        <dbReference type="Rhea" id="RHEA:24809"/>
        <dbReference type="ChEBI" id="CHEBI:11851"/>
        <dbReference type="ChEBI" id="CHEBI:15377"/>
        <dbReference type="ChEBI" id="CHEBI:49072"/>
        <dbReference type="EC" id="4.2.1.9"/>
    </reaction>
    <physiologicalReaction direction="left-to-right" evidence="1">
        <dbReference type="Rhea" id="RHEA:24810"/>
    </physiologicalReaction>
</comment>
<comment type="catalytic activity">
    <reaction evidence="1">
        <text>(2R,3R)-2,3-dihydroxy-3-methylpentanoate = (S)-3-methyl-2-oxopentanoate + H2O</text>
        <dbReference type="Rhea" id="RHEA:27694"/>
        <dbReference type="ChEBI" id="CHEBI:15377"/>
        <dbReference type="ChEBI" id="CHEBI:35146"/>
        <dbReference type="ChEBI" id="CHEBI:49258"/>
        <dbReference type="EC" id="4.2.1.9"/>
    </reaction>
    <physiologicalReaction direction="left-to-right" evidence="1">
        <dbReference type="Rhea" id="RHEA:27695"/>
    </physiologicalReaction>
</comment>
<comment type="cofactor">
    <cofactor evidence="1">
        <name>[2Fe-2S] cluster</name>
        <dbReference type="ChEBI" id="CHEBI:190135"/>
    </cofactor>
    <text evidence="1">Binds 1 [2Fe-2S] cluster per subunit. This cluster acts as a Lewis acid cofactor.</text>
</comment>
<comment type="cofactor">
    <cofactor evidence="1">
        <name>Mg(2+)</name>
        <dbReference type="ChEBI" id="CHEBI:18420"/>
    </cofactor>
</comment>
<comment type="pathway">
    <text evidence="1">Amino-acid biosynthesis; L-isoleucine biosynthesis; L-isoleucine from 2-oxobutanoate: step 3/4.</text>
</comment>
<comment type="pathway">
    <text evidence="1">Amino-acid biosynthesis; L-valine biosynthesis; L-valine from pyruvate: step 3/4.</text>
</comment>
<comment type="subunit">
    <text evidence="1">Homodimer.</text>
</comment>
<comment type="similarity">
    <text evidence="1">Belongs to the IlvD/Edd family.</text>
</comment>
<accession>Q4K498</accession>
<sequence>MPDYRSKTSTHGRNMAGARALWRATGMKDDDFKKPIIAIANSFTQFVPGHVHLKDLGQLVAREIERAGGVAKEFNTIAVDDGIAMGHDGMLYSLPSREIIADSVEYMVNAHCADAIVCISNCDKITPGMLMAALRLNIPVIFVSGGPMEAGKTKLASHGLDLVDAMVIAADSSASDEKVAEYERSACPTCGSCSGMFTANSMNCLTEALGLALPGNGSTLATHSDREELFLRAGRTIVELCQRYYGDNDESVLPRNIANFKAFENAMTLDIAMGGSTNTILHLLAAAQEAEIDFDLRDIDRLSRHVPQLCKVAPNIQKYHMEDVHRAGGIFSILGELARGGLLHTDLPTVHSKTMAEGIAQWDITQTSDEAVHHFFKAGPAGIPTQTAFSQSTRWDSLDDDRENGCIRSVEHAYSKEGGLAVLYGNIALDGCVVKTAGVDESIHVFEGNAKIFESQDSAVRGILADEVKEGDIVIIRYEGPKGGPGMQEMLYPTSYLKSKGLGKACALLTDGRFSGGTSGLSIGHASPEAAAGGTIGLVQDGDKVLIDIPNRSINLLVSDEELAARRVEQDKKGWKPVEARPRKVTTALKAYALLATSADKGAVRNKAMLDGL</sequence>
<proteinExistence type="inferred from homology"/>
<feature type="chain" id="PRO_0000225410" description="Dihydroxy-acid dehydratase">
    <location>
        <begin position="1"/>
        <end position="613"/>
    </location>
</feature>
<feature type="active site" description="Proton acceptor" evidence="1">
    <location>
        <position position="515"/>
    </location>
</feature>
<feature type="binding site" evidence="1">
    <location>
        <position position="81"/>
    </location>
    <ligand>
        <name>Mg(2+)</name>
        <dbReference type="ChEBI" id="CHEBI:18420"/>
    </ligand>
</feature>
<feature type="binding site" evidence="1">
    <location>
        <position position="122"/>
    </location>
    <ligand>
        <name>[2Fe-2S] cluster</name>
        <dbReference type="ChEBI" id="CHEBI:190135"/>
    </ligand>
</feature>
<feature type="binding site" evidence="1">
    <location>
        <position position="123"/>
    </location>
    <ligand>
        <name>Mg(2+)</name>
        <dbReference type="ChEBI" id="CHEBI:18420"/>
    </ligand>
</feature>
<feature type="binding site" description="via carbamate group" evidence="1">
    <location>
        <position position="124"/>
    </location>
    <ligand>
        <name>Mg(2+)</name>
        <dbReference type="ChEBI" id="CHEBI:18420"/>
    </ligand>
</feature>
<feature type="binding site" evidence="1">
    <location>
        <position position="193"/>
    </location>
    <ligand>
        <name>[2Fe-2S] cluster</name>
        <dbReference type="ChEBI" id="CHEBI:190135"/>
    </ligand>
</feature>
<feature type="binding site" evidence="1">
    <location>
        <position position="489"/>
    </location>
    <ligand>
        <name>Mg(2+)</name>
        <dbReference type="ChEBI" id="CHEBI:18420"/>
    </ligand>
</feature>
<feature type="modified residue" description="N6-carboxylysine" evidence="1">
    <location>
        <position position="124"/>
    </location>
</feature>
<name>ILVD_PSEF5</name>
<keyword id="KW-0001">2Fe-2S</keyword>
<keyword id="KW-0028">Amino-acid biosynthesis</keyword>
<keyword id="KW-0100">Branched-chain amino acid biosynthesis</keyword>
<keyword id="KW-0408">Iron</keyword>
<keyword id="KW-0411">Iron-sulfur</keyword>
<keyword id="KW-0456">Lyase</keyword>
<keyword id="KW-0460">Magnesium</keyword>
<keyword id="KW-0479">Metal-binding</keyword>
<protein>
    <recommendedName>
        <fullName evidence="1">Dihydroxy-acid dehydratase</fullName>
        <shortName evidence="1">DAD</shortName>
        <ecNumber evidence="1">4.2.1.9</ecNumber>
    </recommendedName>
</protein>
<organism>
    <name type="scientific">Pseudomonas fluorescens (strain ATCC BAA-477 / NRRL B-23932 / Pf-5)</name>
    <dbReference type="NCBI Taxonomy" id="220664"/>
    <lineage>
        <taxon>Bacteria</taxon>
        <taxon>Pseudomonadati</taxon>
        <taxon>Pseudomonadota</taxon>
        <taxon>Gammaproteobacteria</taxon>
        <taxon>Pseudomonadales</taxon>
        <taxon>Pseudomonadaceae</taxon>
        <taxon>Pseudomonas</taxon>
    </lineage>
</organism>
<evidence type="ECO:0000255" key="1">
    <source>
        <dbReference type="HAMAP-Rule" id="MF_00012"/>
    </source>
</evidence>
<gene>
    <name evidence="1" type="primary">ilvD</name>
    <name type="ordered locus">PFL_5877</name>
</gene>